<name>YL200_MIMIV</name>
<evidence type="ECO:0000256" key="1">
    <source>
        <dbReference type="SAM" id="MobiDB-lite"/>
    </source>
</evidence>
<organism>
    <name type="scientific">Acanthamoeba polyphaga mimivirus</name>
    <name type="common">APMV</name>
    <dbReference type="NCBI Taxonomy" id="212035"/>
    <lineage>
        <taxon>Viruses</taxon>
        <taxon>Varidnaviria</taxon>
        <taxon>Bamfordvirae</taxon>
        <taxon>Nucleocytoviricota</taxon>
        <taxon>Megaviricetes</taxon>
        <taxon>Imitervirales</taxon>
        <taxon>Mimiviridae</taxon>
        <taxon>Megamimivirinae</taxon>
        <taxon>Mimivirus</taxon>
        <taxon>Mimivirus bradfordmassiliense</taxon>
    </lineage>
</organism>
<organismHost>
    <name type="scientific">Acanthamoeba polyphaga</name>
    <name type="common">Amoeba</name>
    <dbReference type="NCBI Taxonomy" id="5757"/>
</organismHost>
<gene>
    <name type="ordered locus">MIMI_L200</name>
</gene>
<dbReference type="EMBL" id="AY653733">
    <property type="protein sequence ID" value="AAV50473.1"/>
    <property type="molecule type" value="Genomic_DNA"/>
</dbReference>
<dbReference type="SMR" id="Q5UQ17"/>
<dbReference type="KEGG" id="vg:9924807"/>
<dbReference type="Proteomes" id="UP000001134">
    <property type="component" value="Genome"/>
</dbReference>
<feature type="chain" id="PRO_0000253231" description="Uncharacterized protein L200">
    <location>
        <begin position="1"/>
        <end position="158"/>
    </location>
</feature>
<feature type="region of interest" description="Disordered" evidence="1">
    <location>
        <begin position="77"/>
        <end position="132"/>
    </location>
</feature>
<feature type="compositionally biased region" description="Basic residues" evidence="1">
    <location>
        <begin position="100"/>
        <end position="120"/>
    </location>
</feature>
<reference key="1">
    <citation type="journal article" date="2004" name="Science">
        <title>The 1.2-megabase genome sequence of Mimivirus.</title>
        <authorList>
            <person name="Raoult D."/>
            <person name="Audic S."/>
            <person name="Robert C."/>
            <person name="Abergel C."/>
            <person name="Renesto P."/>
            <person name="Ogata H."/>
            <person name="La Scola B."/>
            <person name="Susan M."/>
            <person name="Claverie J.-M."/>
        </authorList>
    </citation>
    <scope>NUCLEOTIDE SEQUENCE [LARGE SCALE GENOMIC DNA]</scope>
    <source>
        <strain>Rowbotham-Bradford</strain>
    </source>
</reference>
<proteinExistence type="predicted"/>
<accession>Q5UQ17</accession>
<protein>
    <recommendedName>
        <fullName>Uncharacterized protein L200</fullName>
    </recommendedName>
</protein>
<sequence>MLNNKLTIHKTKKLYGLVSGNIEDTSIRTKEFIASEFYGYKRKFQIGIQSSYKDNESSNKQLLSTVKSLSLKQSDNAIKRNKIGGSKRSEVHSNRSKNYSSKKFRSQKCRRSRQKKRQNKKPNNSRFISSNKTKRKYYKLDFNKFDINGNPEHYLVLQ</sequence>
<keyword id="KW-1185">Reference proteome</keyword>